<feature type="chain" id="PRO_1000199280" description="Methionine--tRNA ligase">
    <location>
        <begin position="1"/>
        <end position="734"/>
    </location>
</feature>
<feature type="domain" description="tRNA-binding" evidence="1">
    <location>
        <begin position="570"/>
        <end position="675"/>
    </location>
</feature>
<feature type="short sequence motif" description="'HIGH' region">
    <location>
        <begin position="12"/>
        <end position="22"/>
    </location>
</feature>
<feature type="short sequence motif" description="'KMSKS' region">
    <location>
        <begin position="330"/>
        <end position="334"/>
    </location>
</feature>
<feature type="binding site" evidence="1">
    <location>
        <position position="143"/>
    </location>
    <ligand>
        <name>Zn(2+)</name>
        <dbReference type="ChEBI" id="CHEBI:29105"/>
    </ligand>
</feature>
<feature type="binding site" evidence="1">
    <location>
        <position position="146"/>
    </location>
    <ligand>
        <name>Zn(2+)</name>
        <dbReference type="ChEBI" id="CHEBI:29105"/>
    </ligand>
</feature>
<feature type="binding site" evidence="1">
    <location>
        <position position="155"/>
    </location>
    <ligand>
        <name>Zn(2+)</name>
        <dbReference type="ChEBI" id="CHEBI:29105"/>
    </ligand>
</feature>
<feature type="binding site" evidence="1">
    <location>
        <position position="158"/>
    </location>
    <ligand>
        <name>Zn(2+)</name>
        <dbReference type="ChEBI" id="CHEBI:29105"/>
    </ligand>
</feature>
<feature type="binding site" evidence="1">
    <location>
        <position position="333"/>
    </location>
    <ligand>
        <name>ATP</name>
        <dbReference type="ChEBI" id="CHEBI:30616"/>
    </ligand>
</feature>
<evidence type="ECO:0000255" key="1">
    <source>
        <dbReference type="HAMAP-Rule" id="MF_00098"/>
    </source>
</evidence>
<dbReference type="EC" id="6.1.1.10" evidence="1"/>
<dbReference type="EMBL" id="CP001205">
    <property type="protein sequence ID" value="ACK74552.1"/>
    <property type="molecule type" value="Genomic_DNA"/>
</dbReference>
<dbReference type="RefSeq" id="WP_012597323.1">
    <property type="nucleotide sequence ID" value="NC_011728.1"/>
</dbReference>
<dbReference type="SMR" id="B7J2F0"/>
<dbReference type="KEGG" id="bbz:BbuZS7_0600"/>
<dbReference type="HOGENOM" id="CLU_009710_1_2_12"/>
<dbReference type="Proteomes" id="UP000006901">
    <property type="component" value="Chromosome"/>
</dbReference>
<dbReference type="GO" id="GO:0017101">
    <property type="term" value="C:aminoacyl-tRNA synthetase multienzyme complex"/>
    <property type="evidence" value="ECO:0007669"/>
    <property type="project" value="TreeGrafter"/>
</dbReference>
<dbReference type="GO" id="GO:0005829">
    <property type="term" value="C:cytosol"/>
    <property type="evidence" value="ECO:0007669"/>
    <property type="project" value="TreeGrafter"/>
</dbReference>
<dbReference type="GO" id="GO:0005524">
    <property type="term" value="F:ATP binding"/>
    <property type="evidence" value="ECO:0007669"/>
    <property type="project" value="UniProtKB-UniRule"/>
</dbReference>
<dbReference type="GO" id="GO:0046872">
    <property type="term" value="F:metal ion binding"/>
    <property type="evidence" value="ECO:0007669"/>
    <property type="project" value="UniProtKB-KW"/>
</dbReference>
<dbReference type="GO" id="GO:0004825">
    <property type="term" value="F:methionine-tRNA ligase activity"/>
    <property type="evidence" value="ECO:0007669"/>
    <property type="project" value="UniProtKB-UniRule"/>
</dbReference>
<dbReference type="GO" id="GO:0000049">
    <property type="term" value="F:tRNA binding"/>
    <property type="evidence" value="ECO:0007669"/>
    <property type="project" value="UniProtKB-KW"/>
</dbReference>
<dbReference type="GO" id="GO:0006431">
    <property type="term" value="P:methionyl-tRNA aminoacylation"/>
    <property type="evidence" value="ECO:0007669"/>
    <property type="project" value="UniProtKB-UniRule"/>
</dbReference>
<dbReference type="CDD" id="cd07957">
    <property type="entry name" value="Anticodon_Ia_Met"/>
    <property type="match status" value="1"/>
</dbReference>
<dbReference type="CDD" id="cd00814">
    <property type="entry name" value="MetRS_core"/>
    <property type="match status" value="1"/>
</dbReference>
<dbReference type="CDD" id="cd02153">
    <property type="entry name" value="tRNA_bindingDomain"/>
    <property type="match status" value="1"/>
</dbReference>
<dbReference type="FunFam" id="2.20.28.20:FF:000001">
    <property type="entry name" value="Methionine--tRNA ligase"/>
    <property type="match status" value="1"/>
</dbReference>
<dbReference type="Gene3D" id="3.40.50.620">
    <property type="entry name" value="HUPs"/>
    <property type="match status" value="1"/>
</dbReference>
<dbReference type="Gene3D" id="1.10.730.10">
    <property type="entry name" value="Isoleucyl-tRNA Synthetase, Domain 1"/>
    <property type="match status" value="1"/>
</dbReference>
<dbReference type="Gene3D" id="2.20.28.20">
    <property type="entry name" value="Methionyl-tRNA synthetase, Zn-domain"/>
    <property type="match status" value="1"/>
</dbReference>
<dbReference type="Gene3D" id="2.40.50.140">
    <property type="entry name" value="Nucleic acid-binding proteins"/>
    <property type="match status" value="1"/>
</dbReference>
<dbReference type="HAMAP" id="MF_00098">
    <property type="entry name" value="Met_tRNA_synth_type1"/>
    <property type="match status" value="1"/>
</dbReference>
<dbReference type="InterPro" id="IPR001412">
    <property type="entry name" value="aa-tRNA-synth_I_CS"/>
</dbReference>
<dbReference type="InterPro" id="IPR041872">
    <property type="entry name" value="Anticodon_Met"/>
</dbReference>
<dbReference type="InterPro" id="IPR004495">
    <property type="entry name" value="Met-tRNA-synth_bsu_C"/>
</dbReference>
<dbReference type="InterPro" id="IPR023458">
    <property type="entry name" value="Met-tRNA_ligase_1"/>
</dbReference>
<dbReference type="InterPro" id="IPR014758">
    <property type="entry name" value="Met-tRNA_synth"/>
</dbReference>
<dbReference type="InterPro" id="IPR015413">
    <property type="entry name" value="Methionyl/Leucyl_tRNA_Synth"/>
</dbReference>
<dbReference type="InterPro" id="IPR033911">
    <property type="entry name" value="MetRS_core"/>
</dbReference>
<dbReference type="InterPro" id="IPR029038">
    <property type="entry name" value="MetRS_Zn"/>
</dbReference>
<dbReference type="InterPro" id="IPR012340">
    <property type="entry name" value="NA-bd_OB-fold"/>
</dbReference>
<dbReference type="InterPro" id="IPR014729">
    <property type="entry name" value="Rossmann-like_a/b/a_fold"/>
</dbReference>
<dbReference type="InterPro" id="IPR002547">
    <property type="entry name" value="tRNA-bd_dom"/>
</dbReference>
<dbReference type="InterPro" id="IPR009080">
    <property type="entry name" value="tRNAsynth_Ia_anticodon-bd"/>
</dbReference>
<dbReference type="NCBIfam" id="TIGR00398">
    <property type="entry name" value="metG"/>
    <property type="match status" value="1"/>
</dbReference>
<dbReference type="NCBIfam" id="TIGR00399">
    <property type="entry name" value="metG_C_term"/>
    <property type="match status" value="1"/>
</dbReference>
<dbReference type="NCBIfam" id="NF001100">
    <property type="entry name" value="PRK00133.1"/>
    <property type="match status" value="1"/>
</dbReference>
<dbReference type="PANTHER" id="PTHR45765">
    <property type="entry name" value="METHIONINE--TRNA LIGASE"/>
    <property type="match status" value="1"/>
</dbReference>
<dbReference type="PANTHER" id="PTHR45765:SF1">
    <property type="entry name" value="METHIONINE--TRNA LIGASE, CYTOPLASMIC"/>
    <property type="match status" value="1"/>
</dbReference>
<dbReference type="Pfam" id="PF19303">
    <property type="entry name" value="Anticodon_3"/>
    <property type="match status" value="1"/>
</dbReference>
<dbReference type="Pfam" id="PF09334">
    <property type="entry name" value="tRNA-synt_1g"/>
    <property type="match status" value="1"/>
</dbReference>
<dbReference type="Pfam" id="PF01588">
    <property type="entry name" value="tRNA_bind"/>
    <property type="match status" value="1"/>
</dbReference>
<dbReference type="PRINTS" id="PR01041">
    <property type="entry name" value="TRNASYNTHMET"/>
</dbReference>
<dbReference type="SUPFAM" id="SSF47323">
    <property type="entry name" value="Anticodon-binding domain of a subclass of class I aminoacyl-tRNA synthetases"/>
    <property type="match status" value="1"/>
</dbReference>
<dbReference type="SUPFAM" id="SSF57770">
    <property type="entry name" value="Methionyl-tRNA synthetase (MetRS), Zn-domain"/>
    <property type="match status" value="1"/>
</dbReference>
<dbReference type="SUPFAM" id="SSF50249">
    <property type="entry name" value="Nucleic acid-binding proteins"/>
    <property type="match status" value="1"/>
</dbReference>
<dbReference type="SUPFAM" id="SSF52374">
    <property type="entry name" value="Nucleotidylyl transferase"/>
    <property type="match status" value="1"/>
</dbReference>
<dbReference type="PROSITE" id="PS00178">
    <property type="entry name" value="AA_TRNA_LIGASE_I"/>
    <property type="match status" value="1"/>
</dbReference>
<dbReference type="PROSITE" id="PS50886">
    <property type="entry name" value="TRBD"/>
    <property type="match status" value="1"/>
</dbReference>
<accession>B7J2F0</accession>
<organism>
    <name type="scientific">Borreliella burgdorferi (strain ZS7)</name>
    <name type="common">Borrelia burgdorferi</name>
    <dbReference type="NCBI Taxonomy" id="445985"/>
    <lineage>
        <taxon>Bacteria</taxon>
        <taxon>Pseudomonadati</taxon>
        <taxon>Spirochaetota</taxon>
        <taxon>Spirochaetia</taxon>
        <taxon>Spirochaetales</taxon>
        <taxon>Borreliaceae</taxon>
        <taxon>Borreliella</taxon>
    </lineage>
</organism>
<comment type="function">
    <text evidence="1">Is required not only for elongation of protein synthesis but also for the initiation of all mRNA translation through initiator tRNA(fMet) aminoacylation.</text>
</comment>
<comment type="catalytic activity">
    <reaction evidence="1">
        <text>tRNA(Met) + L-methionine + ATP = L-methionyl-tRNA(Met) + AMP + diphosphate</text>
        <dbReference type="Rhea" id="RHEA:13481"/>
        <dbReference type="Rhea" id="RHEA-COMP:9667"/>
        <dbReference type="Rhea" id="RHEA-COMP:9698"/>
        <dbReference type="ChEBI" id="CHEBI:30616"/>
        <dbReference type="ChEBI" id="CHEBI:33019"/>
        <dbReference type="ChEBI" id="CHEBI:57844"/>
        <dbReference type="ChEBI" id="CHEBI:78442"/>
        <dbReference type="ChEBI" id="CHEBI:78530"/>
        <dbReference type="ChEBI" id="CHEBI:456215"/>
        <dbReference type="EC" id="6.1.1.10"/>
    </reaction>
</comment>
<comment type="cofactor">
    <cofactor evidence="1">
        <name>Zn(2+)</name>
        <dbReference type="ChEBI" id="CHEBI:29105"/>
    </cofactor>
    <text evidence="1">Binds 1 zinc ion per subunit.</text>
</comment>
<comment type="subunit">
    <text evidence="1">Homodimer.</text>
</comment>
<comment type="subcellular location">
    <subcellularLocation>
        <location evidence="1">Cytoplasm</location>
    </subcellularLocation>
</comment>
<comment type="similarity">
    <text evidence="1">Belongs to the class-I aminoacyl-tRNA synthetase family. MetG type 1 subfamily.</text>
</comment>
<keyword id="KW-0030">Aminoacyl-tRNA synthetase</keyword>
<keyword id="KW-0067">ATP-binding</keyword>
<keyword id="KW-0963">Cytoplasm</keyword>
<keyword id="KW-0436">Ligase</keyword>
<keyword id="KW-0479">Metal-binding</keyword>
<keyword id="KW-0547">Nucleotide-binding</keyword>
<keyword id="KW-0648">Protein biosynthesis</keyword>
<keyword id="KW-0694">RNA-binding</keyword>
<keyword id="KW-0820">tRNA-binding</keyword>
<keyword id="KW-0862">Zinc</keyword>
<proteinExistence type="inferred from homology"/>
<protein>
    <recommendedName>
        <fullName evidence="1">Methionine--tRNA ligase</fullName>
        <ecNumber evidence="1">6.1.1.10</ecNumber>
    </recommendedName>
    <alternativeName>
        <fullName evidence="1">Methionyl-tRNA synthetase</fullName>
        <shortName evidence="1">MetRS</shortName>
    </alternativeName>
</protein>
<gene>
    <name evidence="1" type="primary">metG</name>
    <name type="ordered locus">BbuZS7_0600</name>
</gene>
<sequence>MKKMNLVTAALPYVNNIPHLGNLVQVLSADAFARYSKMSGIKTLYVCGTDEYGTATETKALIENTTPLELCNKYYEIHKSIYKWFNIEFDIFGRTTNKNHQDIVQNFFLQLEKNGYIKERETEQFFCNKDSMFLADRYVIGECPECQSMAKGDQCDNCSKLLNPTDLINPKCIICKNKPILKKTNHLYLDLPKIKTKLEKWIKNPDTSKNWNTNALKMTKAFLRDGLKERAITRDLKWGIPVPKKGFENKVFYVWFDAPIGYISITKNIIKNWESWWKNNDQVNLVQFIGKDNILFHTIIFPCIEIGSEENWTILNQLSSSEYLNYENLKFSKSEGTGIFGNDAITTGIPSDIWRFYIYYNRPEKSDFQFMWQDLMERVNTELIDNFSNLVNRVLTFQRKFFGDVIETIEIQNKFWKQITPKYNKILNLFKKTELKSALKEILKISSLGNKIFQDNEPWKRKNNSPQETKELISNLIYLIRDLSILMMPFIPETSKKIQQFFGNSYQFSTKILGTKSGIKKIEFTEILFNKLEQKKINNLKLKYSGDKNMKENEQAENLPIAKEQPENLFREKVLLRVVKINKIERNPEAKNLFILKLDDGTNKDKQIVSGLEGYYTEEELLGKHIIIVDNLKPAKFRGIKSEGMLIAAEDKNKNFKVIIVEDSIQNPIAGERIILENDQNKDLACPPKIDINKFLKANIVAENGELKINGINLILENSKNKILSKDIPNGTVC</sequence>
<reference key="1">
    <citation type="journal article" date="2011" name="J. Bacteriol.">
        <title>Whole-genome sequences of thirteen isolates of Borrelia burgdorferi.</title>
        <authorList>
            <person name="Schutzer S.E."/>
            <person name="Fraser-Liggett C.M."/>
            <person name="Casjens S.R."/>
            <person name="Qiu W.G."/>
            <person name="Dunn J.J."/>
            <person name="Mongodin E.F."/>
            <person name="Luft B.J."/>
        </authorList>
    </citation>
    <scope>NUCLEOTIDE SEQUENCE [LARGE SCALE GENOMIC DNA]</scope>
    <source>
        <strain>ZS7</strain>
    </source>
</reference>
<name>SYM_BORBZ</name>